<proteinExistence type="evidence at protein level"/>
<gene>
    <name type="primary">Ndufa10</name>
</gene>
<protein>
    <recommendedName>
        <fullName>NADH dehydrogenase [ubiquinone] 1 alpha subcomplex subunit 10, mitochondrial</fullName>
    </recommendedName>
    <alternativeName>
        <fullName>Complex I-42kD</fullName>
        <shortName>CI-42kD</shortName>
    </alternativeName>
    <alternativeName>
        <fullName>NADH-ubiquinone oxidoreductase 42 kDa subunit</fullName>
    </alternativeName>
</protein>
<accession>Q561S0</accession>
<accession>Q80WE0</accession>
<reference key="1">
    <citation type="submission" date="2003-03" db="EMBL/GenBank/DDBJ databases">
        <authorList>
            <person name="Zhang G."/>
            <person name="Liu F."/>
            <person name="Yang P."/>
        </authorList>
    </citation>
    <scope>NUCLEOTIDE SEQUENCE [MRNA]</scope>
</reference>
<reference key="2">
    <citation type="journal article" date="2004" name="Genome Res.">
        <title>The status, quality, and expansion of the NIH full-length cDNA project: the Mammalian Gene Collection (MGC).</title>
        <authorList>
            <consortium name="The MGC Project Team"/>
        </authorList>
    </citation>
    <scope>NUCLEOTIDE SEQUENCE [LARGE SCALE MRNA]</scope>
    <source>
        <tissue>Thymus</tissue>
    </source>
</reference>
<reference key="3">
    <citation type="submission" date="2006-11" db="UniProtKB">
        <authorList>
            <person name="Lubec G."/>
            <person name="Afjehi-Sadat L."/>
        </authorList>
    </citation>
    <scope>PROTEIN SEQUENCE OF 140-161; 182-192 AND 303-326</scope>
    <scope>IDENTIFICATION BY MASS SPECTROMETRY</scope>
    <source>
        <strain>Sprague-Dawley</strain>
        <tissue>Spinal cord</tissue>
    </source>
</reference>
<reference key="4">
    <citation type="journal article" date="2011" name="J. Androl.">
        <title>Differential proteomics leads to identification of domain specific epididymal sperm proteins.</title>
        <authorList>
            <person name="Suryawanshi A.R."/>
            <person name="Khan S.A."/>
            <person name="Gajbhiye R.K."/>
            <person name="Gurav M.Y."/>
            <person name="Khole V.V."/>
        </authorList>
    </citation>
    <scope>IDENTIFICATION BY MASS SPECTROMETRY</scope>
    <scope>TISSUE SPECIFICITY</scope>
    <scope>MASS SPECTROMETRY</scope>
    <source>
        <strain>Holtzman</strain>
        <tissue>Sperm</tissue>
    </source>
</reference>
<dbReference type="EMBL" id="AY260163">
    <property type="protein sequence ID" value="AAP20092.1"/>
    <property type="molecule type" value="mRNA"/>
</dbReference>
<dbReference type="EMBL" id="BC093375">
    <property type="protein sequence ID" value="AAH93375.1"/>
    <property type="molecule type" value="mRNA"/>
</dbReference>
<dbReference type="RefSeq" id="NP_872612.1">
    <property type="nucleotide sequence ID" value="NM_182671.2"/>
</dbReference>
<dbReference type="RefSeq" id="NP_955789.2">
    <property type="nucleotide sequence ID" value="NM_199495.4"/>
</dbReference>
<dbReference type="RefSeq" id="XP_063123776.1">
    <property type="nucleotide sequence ID" value="XM_063267706.1"/>
</dbReference>
<dbReference type="RefSeq" id="XP_063123777.1">
    <property type="nucleotide sequence ID" value="XM_063267707.1"/>
</dbReference>
<dbReference type="SMR" id="Q561S0"/>
<dbReference type="BioGRID" id="593710">
    <property type="interactions" value="1"/>
</dbReference>
<dbReference type="FunCoup" id="Q561S0">
    <property type="interactions" value="2403"/>
</dbReference>
<dbReference type="IntAct" id="Q561S0">
    <property type="interactions" value="3"/>
</dbReference>
<dbReference type="MINT" id="Q561S0"/>
<dbReference type="STRING" id="10116.ENSRNOP00000022089"/>
<dbReference type="CarbonylDB" id="Q561S0"/>
<dbReference type="GlyGen" id="Q561S0">
    <property type="glycosylation" value="4 sites, 1 O-linked glycan (4 sites)"/>
</dbReference>
<dbReference type="iPTMnet" id="Q561S0"/>
<dbReference type="PhosphoSitePlus" id="Q561S0"/>
<dbReference type="jPOST" id="Q561S0"/>
<dbReference type="PaxDb" id="10116-ENSRNOP00000022089"/>
<dbReference type="GeneID" id="316632"/>
<dbReference type="GeneID" id="678759"/>
<dbReference type="KEGG" id="rno:316632"/>
<dbReference type="KEGG" id="rno:678759"/>
<dbReference type="UCSC" id="RGD:727968">
    <property type="organism name" value="rat"/>
</dbReference>
<dbReference type="AGR" id="RGD:1589745"/>
<dbReference type="AGR" id="RGD:727968"/>
<dbReference type="CTD" id="316632"/>
<dbReference type="CTD" id="4705"/>
<dbReference type="RGD" id="727968">
    <property type="gene designation" value="Ndufa10"/>
</dbReference>
<dbReference type="VEuPathDB" id="HostDB:ENSRNOG00000016470"/>
<dbReference type="eggNOG" id="KOG3877">
    <property type="taxonomic scope" value="Eukaryota"/>
</dbReference>
<dbReference type="HOGENOM" id="CLU_050591_0_0_1"/>
<dbReference type="InParanoid" id="Q561S0"/>
<dbReference type="OrthoDB" id="31861at9989"/>
<dbReference type="PhylomeDB" id="Q561S0"/>
<dbReference type="TreeFam" id="TF314616"/>
<dbReference type="BRENDA" id="7.1.1.2">
    <property type="organism ID" value="5301"/>
</dbReference>
<dbReference type="Reactome" id="R-RNO-611105">
    <property type="pathway name" value="Respiratory electron transport"/>
</dbReference>
<dbReference type="Reactome" id="R-RNO-6799198">
    <property type="pathway name" value="Complex I biogenesis"/>
</dbReference>
<dbReference type="PRO" id="PR:Q561S0"/>
<dbReference type="Proteomes" id="UP000002494">
    <property type="component" value="Chromosome 9"/>
</dbReference>
<dbReference type="Bgee" id="ENSRNOG00000016470">
    <property type="expression patterns" value="Expressed in heart and 19 other cell types or tissues"/>
</dbReference>
<dbReference type="GO" id="GO:0005737">
    <property type="term" value="C:cytoplasm"/>
    <property type="evidence" value="ECO:0000318"/>
    <property type="project" value="GO_Central"/>
</dbReference>
<dbReference type="GO" id="GO:0005743">
    <property type="term" value="C:mitochondrial inner membrane"/>
    <property type="evidence" value="ECO:0000266"/>
    <property type="project" value="RGD"/>
</dbReference>
<dbReference type="GO" id="GO:0005759">
    <property type="term" value="C:mitochondrial matrix"/>
    <property type="evidence" value="ECO:0007669"/>
    <property type="project" value="UniProtKB-SubCell"/>
</dbReference>
<dbReference type="GO" id="GO:0045271">
    <property type="term" value="C:respiratory chain complex I"/>
    <property type="evidence" value="ECO:0000250"/>
    <property type="project" value="UniProtKB"/>
</dbReference>
<dbReference type="GO" id="GO:0008137">
    <property type="term" value="F:NADH dehydrogenase (ubiquinone) activity"/>
    <property type="evidence" value="ECO:0000266"/>
    <property type="project" value="RGD"/>
</dbReference>
<dbReference type="GO" id="GO:0006120">
    <property type="term" value="P:mitochondrial electron transport, NADH to ubiquinone"/>
    <property type="evidence" value="ECO:0000266"/>
    <property type="project" value="RGD"/>
</dbReference>
<dbReference type="GO" id="GO:0009410">
    <property type="term" value="P:response to xenobiotic stimulus"/>
    <property type="evidence" value="ECO:0000270"/>
    <property type="project" value="RGD"/>
</dbReference>
<dbReference type="CDD" id="cd02030">
    <property type="entry name" value="NDUO42"/>
    <property type="match status" value="1"/>
</dbReference>
<dbReference type="FunFam" id="3.40.50.300:FF:000837">
    <property type="entry name" value="NADH dehydrogenase [ubiquinone] 1 alpha subcomplex subunit 10, mitochondrial"/>
    <property type="match status" value="1"/>
</dbReference>
<dbReference type="Gene3D" id="3.40.50.300">
    <property type="entry name" value="P-loop containing nucleotide triphosphate hydrolases"/>
    <property type="match status" value="1"/>
</dbReference>
<dbReference type="InterPro" id="IPR050566">
    <property type="entry name" value="Deoxyribonucleoside_kinase"/>
</dbReference>
<dbReference type="InterPro" id="IPR031314">
    <property type="entry name" value="DNK_dom"/>
</dbReference>
<dbReference type="InterPro" id="IPR015828">
    <property type="entry name" value="NDUFA10"/>
</dbReference>
<dbReference type="InterPro" id="IPR027417">
    <property type="entry name" value="P-loop_NTPase"/>
</dbReference>
<dbReference type="PANTHER" id="PTHR10513">
    <property type="entry name" value="DEOXYNUCLEOSIDE KINASE"/>
    <property type="match status" value="1"/>
</dbReference>
<dbReference type="PANTHER" id="PTHR10513:SF15">
    <property type="entry name" value="NADH DEHYDROGENASE [UBIQUINONE] 1 ALPHA SUBCOMPLEX SUBUNIT 10, MITOCHONDRIAL"/>
    <property type="match status" value="1"/>
</dbReference>
<dbReference type="Pfam" id="PF01712">
    <property type="entry name" value="dNK"/>
    <property type="match status" value="1"/>
</dbReference>
<dbReference type="PIRSF" id="PIRSF000543">
    <property type="entry name" value="NADH_UQ_42KD"/>
    <property type="match status" value="1"/>
</dbReference>
<dbReference type="SUPFAM" id="SSF52540">
    <property type="entry name" value="P-loop containing nucleoside triphosphate hydrolases"/>
    <property type="match status" value="1"/>
</dbReference>
<feature type="transit peptide" description="Mitochondrion" evidence="3">
    <location>
        <begin position="1"/>
        <end position="35"/>
    </location>
</feature>
<feature type="chain" id="PRO_0000270761" description="NADH dehydrogenase [ubiquinone] 1 alpha subcomplex subunit 10, mitochondrial">
    <location>
        <begin position="36"/>
        <end position="355"/>
    </location>
</feature>
<feature type="modified residue" description="N6-acetyllysine; alternate" evidence="4">
    <location>
        <position position="122"/>
    </location>
</feature>
<feature type="modified residue" description="N6-succinyllysine; alternate" evidence="4">
    <location>
        <position position="122"/>
    </location>
</feature>
<feature type="modified residue" description="Phosphoserine; by PINK1" evidence="4">
    <location>
        <position position="250"/>
    </location>
</feature>
<feature type="modified residue" description="N6-succinyllysine" evidence="4">
    <location>
        <position position="285"/>
    </location>
</feature>
<feature type="sequence conflict" description="In Ref. 1; AAP20092." evidence="6" ref="1">
    <original>N</original>
    <variation>D</variation>
    <location>
        <position position="120"/>
    </location>
</feature>
<feature type="sequence conflict" description="In Ref. 1; AAP20092." evidence="6" ref="1">
    <original>Q</original>
    <variation>R</variation>
    <location>
        <position position="176"/>
    </location>
</feature>
<feature type="sequence conflict" description="In Ref. 1; AAP20092." evidence="6" ref="1">
    <original>P</original>
    <variation>S</variation>
    <location>
        <position position="201"/>
    </location>
</feature>
<feature type="sequence conflict" description="In Ref. 1; AAP20092." evidence="6" ref="1">
    <original>K</original>
    <variation>Q</variation>
    <location>
        <position position="248"/>
    </location>
</feature>
<feature type="sequence conflict" description="In Ref. 1; AAP20092." evidence="6" ref="1">
    <original>V</original>
    <variation>M</variation>
    <location>
        <position position="257"/>
    </location>
</feature>
<name>NDUAA_RAT</name>
<sequence length="355" mass="40493">MALRLLRLVPASASARGLAAGAQRVGRIHTSVHCKLRYGLLASILGDKTTKKLHEYSRVITVDGNICSGKNKLARDIAEQLGMKHYPEAGIQYSSSTTGDGRPLDIEFSGSCSLEKFYDNPKSNDGNSYRLQSWLYASRLLQYSDALEHLLSTGQGVVLERSIYSDFVFLEAMYNQGFIRKQCVDHYNEIKRLTLPEYLPPHAVIYIDVPVSEIQSRIQKKGDPHEMKVTSAYLQDIEDAYKKTFLPKMSEICEVLVYSSWEAEDSTKVVEDIEYLNYNKGPWLKQDDRTFHNLRMLVQDKREVLNYTTVPVYLPEITIGAHQGSRIYDSFRELPGRKYAPGYNADVGDKWIWLK</sequence>
<keyword id="KW-0007">Acetylation</keyword>
<keyword id="KW-0903">Direct protein sequencing</keyword>
<keyword id="KW-0249">Electron transport</keyword>
<keyword id="KW-0274">FAD</keyword>
<keyword id="KW-0285">Flavoprotein</keyword>
<keyword id="KW-0496">Mitochondrion</keyword>
<keyword id="KW-0597">Phosphoprotein</keyword>
<keyword id="KW-1185">Reference proteome</keyword>
<keyword id="KW-0679">Respiratory chain</keyword>
<keyword id="KW-0809">Transit peptide</keyword>
<keyword id="KW-0813">Transport</keyword>
<organism>
    <name type="scientific">Rattus norvegicus</name>
    <name type="common">Rat</name>
    <dbReference type="NCBI Taxonomy" id="10116"/>
    <lineage>
        <taxon>Eukaryota</taxon>
        <taxon>Metazoa</taxon>
        <taxon>Chordata</taxon>
        <taxon>Craniata</taxon>
        <taxon>Vertebrata</taxon>
        <taxon>Euteleostomi</taxon>
        <taxon>Mammalia</taxon>
        <taxon>Eutheria</taxon>
        <taxon>Euarchontoglires</taxon>
        <taxon>Glires</taxon>
        <taxon>Rodentia</taxon>
        <taxon>Myomorpha</taxon>
        <taxon>Muroidea</taxon>
        <taxon>Muridae</taxon>
        <taxon>Murinae</taxon>
        <taxon>Rattus</taxon>
    </lineage>
</organism>
<comment type="function">
    <text evidence="2">Accessory subunit of the mitochondrial membrane respiratory chain NADH dehydrogenase (Complex I), that is believed not to be involved in catalysis. Complex I functions in the transfer of electrons from NADH to the respiratory chain. The immediate electron acceptor for the enzyme is believed to be ubiquinone.</text>
</comment>
<comment type="cofactor">
    <cofactor evidence="1">
        <name>FAD</name>
        <dbReference type="ChEBI" id="CHEBI:57692"/>
    </cofactor>
    <text evidence="1">Binds 1 FAD per subunit.</text>
</comment>
<comment type="subunit">
    <text evidence="2">Complex I is composed of 45 different subunits. This a component of the hydrophobic protein fraction.</text>
</comment>
<comment type="subcellular location">
    <subcellularLocation>
        <location evidence="2">Mitochondrion matrix</location>
    </subcellularLocation>
</comment>
<comment type="tissue specificity">
    <text evidence="5">Expressed in the head and flagellum of epididymal sperm but not in testicular sperm (at protein level).</text>
</comment>
<comment type="PTM">
    <text evidence="4">Phosphorylation at Ser-250 by PINK1 is required for the binding and/or reduction of the complex I substrate ubiquinone.</text>
</comment>
<comment type="similarity">
    <text evidence="6">Belongs to the complex I NDUFA10 subunit family.</text>
</comment>
<evidence type="ECO:0000250" key="1"/>
<evidence type="ECO:0000250" key="2">
    <source>
        <dbReference type="UniProtKB" id="O95299"/>
    </source>
</evidence>
<evidence type="ECO:0000250" key="3">
    <source>
        <dbReference type="UniProtKB" id="P34942"/>
    </source>
</evidence>
<evidence type="ECO:0000250" key="4">
    <source>
        <dbReference type="UniProtKB" id="Q99LC3"/>
    </source>
</evidence>
<evidence type="ECO:0000269" key="5">
    <source>
    </source>
</evidence>
<evidence type="ECO:0000305" key="6"/>